<evidence type="ECO:0000255" key="1">
    <source>
        <dbReference type="HAMAP-Rule" id="MF_01416"/>
    </source>
</evidence>
<protein>
    <recommendedName>
        <fullName evidence="1">ATP synthase subunit delta</fullName>
    </recommendedName>
    <alternativeName>
        <fullName evidence="1">ATP synthase F(1) sector subunit delta</fullName>
    </alternativeName>
    <alternativeName>
        <fullName evidence="1">F-type ATPase subunit delta</fullName>
        <shortName evidence="1">F-ATPase subunit delta</shortName>
    </alternativeName>
</protein>
<reference key="1">
    <citation type="journal article" date="2009" name="Appl. Environ. Microbiol.">
        <title>Three genomes from the phylum Acidobacteria provide insight into the lifestyles of these microorganisms in soils.</title>
        <authorList>
            <person name="Ward N.L."/>
            <person name="Challacombe J.F."/>
            <person name="Janssen P.H."/>
            <person name="Henrissat B."/>
            <person name="Coutinho P.M."/>
            <person name="Wu M."/>
            <person name="Xie G."/>
            <person name="Haft D.H."/>
            <person name="Sait M."/>
            <person name="Badger J."/>
            <person name="Barabote R.D."/>
            <person name="Bradley B."/>
            <person name="Brettin T.S."/>
            <person name="Brinkac L.M."/>
            <person name="Bruce D."/>
            <person name="Creasy T."/>
            <person name="Daugherty S.C."/>
            <person name="Davidsen T.M."/>
            <person name="DeBoy R.T."/>
            <person name="Detter J.C."/>
            <person name="Dodson R.J."/>
            <person name="Durkin A.S."/>
            <person name="Ganapathy A."/>
            <person name="Gwinn-Giglio M."/>
            <person name="Han C.S."/>
            <person name="Khouri H."/>
            <person name="Kiss H."/>
            <person name="Kothari S.P."/>
            <person name="Madupu R."/>
            <person name="Nelson K.E."/>
            <person name="Nelson W.C."/>
            <person name="Paulsen I."/>
            <person name="Penn K."/>
            <person name="Ren Q."/>
            <person name="Rosovitz M.J."/>
            <person name="Selengut J.D."/>
            <person name="Shrivastava S."/>
            <person name="Sullivan S.A."/>
            <person name="Tapia R."/>
            <person name="Thompson L.S."/>
            <person name="Watkins K.L."/>
            <person name="Yang Q."/>
            <person name="Yu C."/>
            <person name="Zafar N."/>
            <person name="Zhou L."/>
            <person name="Kuske C.R."/>
        </authorList>
    </citation>
    <scope>NUCLEOTIDE SEQUENCE [LARGE SCALE GENOMIC DNA]</scope>
    <source>
        <strain>Ellin345</strain>
    </source>
</reference>
<organism>
    <name type="scientific">Koribacter versatilis (strain Ellin345)</name>
    <dbReference type="NCBI Taxonomy" id="204669"/>
    <lineage>
        <taxon>Bacteria</taxon>
        <taxon>Pseudomonadati</taxon>
        <taxon>Acidobacteriota</taxon>
        <taxon>Terriglobia</taxon>
        <taxon>Terriglobales</taxon>
        <taxon>Candidatus Korobacteraceae</taxon>
        <taxon>Candidatus Korobacter</taxon>
    </lineage>
</organism>
<sequence length="179" mass="19703">MASVTIRYANALADVVLSNRLDVTTAVRDLNNIVSMTIESEDLRKVWENPSIAVAQKRAILDGLVGMVGTPRIIRNFVAVLIDHQRVPLLPRIARQFELELNHRMGFADAEVTSVHELSAQDRQMIEQQIAKVVGKSVRARYKTNATLLGGAIIRVGSTVYDGSIKGQLAKIKEQLSAS</sequence>
<gene>
    <name evidence="1" type="primary">atpH</name>
    <name type="ordered locus">Acid345_4335</name>
</gene>
<proteinExistence type="inferred from homology"/>
<accession>Q1IIG5</accession>
<name>ATPD_KORVE</name>
<comment type="function">
    <text evidence="1">F(1)F(0) ATP synthase produces ATP from ADP in the presence of a proton or sodium gradient. F-type ATPases consist of two structural domains, F(1) containing the extramembraneous catalytic core and F(0) containing the membrane proton channel, linked together by a central stalk and a peripheral stalk. During catalysis, ATP synthesis in the catalytic domain of F(1) is coupled via a rotary mechanism of the central stalk subunits to proton translocation.</text>
</comment>
<comment type="function">
    <text evidence="1">This protein is part of the stalk that links CF(0) to CF(1). It either transmits conformational changes from CF(0) to CF(1) or is implicated in proton conduction.</text>
</comment>
<comment type="subunit">
    <text evidence="1">F-type ATPases have 2 components, F(1) - the catalytic core - and F(0) - the membrane proton channel. F(1) has five subunits: alpha(3), beta(3), gamma(1), delta(1), epsilon(1). F(0) has three main subunits: a(1), b(2) and c(10-14). The alpha and beta chains form an alternating ring which encloses part of the gamma chain. F(1) is attached to F(0) by a central stalk formed by the gamma and epsilon chains, while a peripheral stalk is formed by the delta and b chains.</text>
</comment>
<comment type="subcellular location">
    <subcellularLocation>
        <location evidence="1">Cell inner membrane</location>
        <topology evidence="1">Peripheral membrane protein</topology>
    </subcellularLocation>
</comment>
<comment type="similarity">
    <text evidence="1">Belongs to the ATPase delta chain family.</text>
</comment>
<keyword id="KW-0066">ATP synthesis</keyword>
<keyword id="KW-0997">Cell inner membrane</keyword>
<keyword id="KW-1003">Cell membrane</keyword>
<keyword id="KW-0139">CF(1)</keyword>
<keyword id="KW-0375">Hydrogen ion transport</keyword>
<keyword id="KW-0406">Ion transport</keyword>
<keyword id="KW-0472">Membrane</keyword>
<keyword id="KW-1185">Reference proteome</keyword>
<keyword id="KW-0813">Transport</keyword>
<feature type="chain" id="PRO_0000382048" description="ATP synthase subunit delta">
    <location>
        <begin position="1"/>
        <end position="179"/>
    </location>
</feature>
<dbReference type="EMBL" id="CP000360">
    <property type="protein sequence ID" value="ABF43335.1"/>
    <property type="molecule type" value="Genomic_DNA"/>
</dbReference>
<dbReference type="RefSeq" id="WP_011525132.1">
    <property type="nucleotide sequence ID" value="NC_008009.1"/>
</dbReference>
<dbReference type="SMR" id="Q1IIG5"/>
<dbReference type="STRING" id="204669.Acid345_4335"/>
<dbReference type="EnsemblBacteria" id="ABF43335">
    <property type="protein sequence ID" value="ABF43335"/>
    <property type="gene ID" value="Acid345_4335"/>
</dbReference>
<dbReference type="KEGG" id="aba:Acid345_4335"/>
<dbReference type="eggNOG" id="COG0712">
    <property type="taxonomic scope" value="Bacteria"/>
</dbReference>
<dbReference type="HOGENOM" id="CLU_085114_3_0_0"/>
<dbReference type="OrthoDB" id="9802471at2"/>
<dbReference type="Proteomes" id="UP000002432">
    <property type="component" value="Chromosome"/>
</dbReference>
<dbReference type="GO" id="GO:0005886">
    <property type="term" value="C:plasma membrane"/>
    <property type="evidence" value="ECO:0007669"/>
    <property type="project" value="UniProtKB-SubCell"/>
</dbReference>
<dbReference type="GO" id="GO:0045259">
    <property type="term" value="C:proton-transporting ATP synthase complex"/>
    <property type="evidence" value="ECO:0007669"/>
    <property type="project" value="UniProtKB-KW"/>
</dbReference>
<dbReference type="GO" id="GO:0046933">
    <property type="term" value="F:proton-transporting ATP synthase activity, rotational mechanism"/>
    <property type="evidence" value="ECO:0007669"/>
    <property type="project" value="UniProtKB-UniRule"/>
</dbReference>
<dbReference type="Gene3D" id="1.10.520.20">
    <property type="entry name" value="N-terminal domain of the delta subunit of the F1F0-ATP synthase"/>
    <property type="match status" value="1"/>
</dbReference>
<dbReference type="HAMAP" id="MF_01416">
    <property type="entry name" value="ATP_synth_delta_bact"/>
    <property type="match status" value="1"/>
</dbReference>
<dbReference type="InterPro" id="IPR026015">
    <property type="entry name" value="ATP_synth_OSCP/delta_N_sf"/>
</dbReference>
<dbReference type="InterPro" id="IPR000711">
    <property type="entry name" value="ATPase_OSCP/dsu"/>
</dbReference>
<dbReference type="NCBIfam" id="TIGR01145">
    <property type="entry name" value="ATP_synt_delta"/>
    <property type="match status" value="1"/>
</dbReference>
<dbReference type="PANTHER" id="PTHR11910">
    <property type="entry name" value="ATP SYNTHASE DELTA CHAIN"/>
    <property type="match status" value="1"/>
</dbReference>
<dbReference type="Pfam" id="PF00213">
    <property type="entry name" value="OSCP"/>
    <property type="match status" value="1"/>
</dbReference>
<dbReference type="PRINTS" id="PR00125">
    <property type="entry name" value="ATPASEDELTA"/>
</dbReference>
<dbReference type="SUPFAM" id="SSF47928">
    <property type="entry name" value="N-terminal domain of the delta subunit of the F1F0-ATP synthase"/>
    <property type="match status" value="1"/>
</dbReference>